<proteinExistence type="evidence at transcript level"/>
<dbReference type="EMBL" id="AE014296">
    <property type="protein sequence ID" value="AAF49820.1"/>
    <property type="molecule type" value="Genomic_DNA"/>
</dbReference>
<dbReference type="EMBL" id="BT088862">
    <property type="protein sequence ID" value="ACS78062.1"/>
    <property type="molecule type" value="mRNA"/>
</dbReference>
<dbReference type="RefSeq" id="NP_648644.1">
    <property type="nucleotide sequence ID" value="NM_140387.2"/>
</dbReference>
<dbReference type="SMR" id="Q9VU70"/>
<dbReference type="BioGRID" id="64851">
    <property type="interactions" value="2"/>
</dbReference>
<dbReference type="FunCoup" id="Q9VU70">
    <property type="interactions" value="16"/>
</dbReference>
<dbReference type="IntAct" id="Q9VU70">
    <property type="interactions" value="2"/>
</dbReference>
<dbReference type="STRING" id="7227.FBpp0075591"/>
<dbReference type="PaxDb" id="7227-FBpp0075591"/>
<dbReference type="DNASU" id="39507"/>
<dbReference type="EnsemblMetazoa" id="FBtr0075857">
    <property type="protein sequence ID" value="FBpp0075591"/>
    <property type="gene ID" value="FBgn0036359"/>
</dbReference>
<dbReference type="GeneID" id="39507"/>
<dbReference type="KEGG" id="dme:Dmel_CG14105"/>
<dbReference type="UCSC" id="CG14105-RA">
    <property type="organism name" value="d. melanogaster"/>
</dbReference>
<dbReference type="AGR" id="FB:FBgn0036359"/>
<dbReference type="FlyBase" id="FBgn0036359">
    <property type="gene designation" value="CG14105"/>
</dbReference>
<dbReference type="VEuPathDB" id="VectorBase:FBgn0036359"/>
<dbReference type="eggNOG" id="KOG4555">
    <property type="taxonomic scope" value="Eukaryota"/>
</dbReference>
<dbReference type="GeneTree" id="ENSGT00390000007968"/>
<dbReference type="HOGENOM" id="CLU_1464567_0_0_1"/>
<dbReference type="InParanoid" id="Q9VU70"/>
<dbReference type="OMA" id="CNQMLCE"/>
<dbReference type="OrthoDB" id="539634at2759"/>
<dbReference type="PhylomeDB" id="Q9VU70"/>
<dbReference type="BioGRID-ORCS" id="39507">
    <property type="hits" value="0 hits in 1 CRISPR screen"/>
</dbReference>
<dbReference type="GenomeRNAi" id="39507"/>
<dbReference type="PRO" id="PR:Q9VU70"/>
<dbReference type="Proteomes" id="UP000000803">
    <property type="component" value="Chromosome 3L"/>
</dbReference>
<dbReference type="Bgee" id="FBgn0036359">
    <property type="expression patterns" value="Expressed in epithelial cell in haltere and 27 other cell types or tissues"/>
</dbReference>
<dbReference type="GO" id="GO:0006570">
    <property type="term" value="P:tyrosine metabolic process"/>
    <property type="evidence" value="ECO:0000318"/>
    <property type="project" value="GO_Central"/>
</dbReference>
<dbReference type="FunFam" id="1.25.40.10:FF:001879">
    <property type="entry name" value="Tetratricopeptide repeat protein 36 homolog"/>
    <property type="match status" value="1"/>
</dbReference>
<dbReference type="Gene3D" id="1.25.40.10">
    <property type="entry name" value="Tetratricopeptide repeat domain"/>
    <property type="match status" value="1"/>
</dbReference>
<dbReference type="InterPro" id="IPR011990">
    <property type="entry name" value="TPR-like_helical_dom_sf"/>
</dbReference>
<dbReference type="InterPro" id="IPR019734">
    <property type="entry name" value="TPR_rpt"/>
</dbReference>
<dbReference type="InterPro" id="IPR038906">
    <property type="entry name" value="TTC36"/>
</dbReference>
<dbReference type="PANTHER" id="PTHR21405">
    <property type="entry name" value="CDNA SEQUENCE BC021608"/>
    <property type="match status" value="1"/>
</dbReference>
<dbReference type="PANTHER" id="PTHR21405:SF0">
    <property type="entry name" value="TETRATRICOPEPTIDE REPEAT PROTEIN 36"/>
    <property type="match status" value="1"/>
</dbReference>
<dbReference type="Pfam" id="PF13374">
    <property type="entry name" value="TPR_10"/>
    <property type="match status" value="1"/>
</dbReference>
<dbReference type="Pfam" id="PF13181">
    <property type="entry name" value="TPR_8"/>
    <property type="match status" value="1"/>
</dbReference>
<dbReference type="SMART" id="SM00028">
    <property type="entry name" value="TPR"/>
    <property type="match status" value="2"/>
</dbReference>
<dbReference type="SUPFAM" id="SSF48452">
    <property type="entry name" value="TPR-like"/>
    <property type="match status" value="1"/>
</dbReference>
<dbReference type="PROSITE" id="PS50293">
    <property type="entry name" value="TPR_REGION"/>
    <property type="match status" value="2"/>
</dbReference>
<comment type="similarity">
    <text evidence="1">Belongs to the TTC36 family.</text>
</comment>
<reference key="1">
    <citation type="journal article" date="2000" name="Science">
        <title>The genome sequence of Drosophila melanogaster.</title>
        <authorList>
            <person name="Adams M.D."/>
            <person name="Celniker S.E."/>
            <person name="Holt R.A."/>
            <person name="Evans C.A."/>
            <person name="Gocayne J.D."/>
            <person name="Amanatides P.G."/>
            <person name="Scherer S.E."/>
            <person name="Li P.W."/>
            <person name="Hoskins R.A."/>
            <person name="Galle R.F."/>
            <person name="George R.A."/>
            <person name="Lewis S.E."/>
            <person name="Richards S."/>
            <person name="Ashburner M."/>
            <person name="Henderson S.N."/>
            <person name="Sutton G.G."/>
            <person name="Wortman J.R."/>
            <person name="Yandell M.D."/>
            <person name="Zhang Q."/>
            <person name="Chen L.X."/>
            <person name="Brandon R.C."/>
            <person name="Rogers Y.-H.C."/>
            <person name="Blazej R.G."/>
            <person name="Champe M."/>
            <person name="Pfeiffer B.D."/>
            <person name="Wan K.H."/>
            <person name="Doyle C."/>
            <person name="Baxter E.G."/>
            <person name="Helt G."/>
            <person name="Nelson C.R."/>
            <person name="Miklos G.L.G."/>
            <person name="Abril J.F."/>
            <person name="Agbayani A."/>
            <person name="An H.-J."/>
            <person name="Andrews-Pfannkoch C."/>
            <person name="Baldwin D."/>
            <person name="Ballew R.M."/>
            <person name="Basu A."/>
            <person name="Baxendale J."/>
            <person name="Bayraktaroglu L."/>
            <person name="Beasley E.M."/>
            <person name="Beeson K.Y."/>
            <person name="Benos P.V."/>
            <person name="Berman B.P."/>
            <person name="Bhandari D."/>
            <person name="Bolshakov S."/>
            <person name="Borkova D."/>
            <person name="Botchan M.R."/>
            <person name="Bouck J."/>
            <person name="Brokstein P."/>
            <person name="Brottier P."/>
            <person name="Burtis K.C."/>
            <person name="Busam D.A."/>
            <person name="Butler H."/>
            <person name="Cadieu E."/>
            <person name="Center A."/>
            <person name="Chandra I."/>
            <person name="Cherry J.M."/>
            <person name="Cawley S."/>
            <person name="Dahlke C."/>
            <person name="Davenport L.B."/>
            <person name="Davies P."/>
            <person name="de Pablos B."/>
            <person name="Delcher A."/>
            <person name="Deng Z."/>
            <person name="Mays A.D."/>
            <person name="Dew I."/>
            <person name="Dietz S.M."/>
            <person name="Dodson K."/>
            <person name="Doup L.E."/>
            <person name="Downes M."/>
            <person name="Dugan-Rocha S."/>
            <person name="Dunkov B.C."/>
            <person name="Dunn P."/>
            <person name="Durbin K.J."/>
            <person name="Evangelista C.C."/>
            <person name="Ferraz C."/>
            <person name="Ferriera S."/>
            <person name="Fleischmann W."/>
            <person name="Fosler C."/>
            <person name="Gabrielian A.E."/>
            <person name="Garg N.S."/>
            <person name="Gelbart W.M."/>
            <person name="Glasser K."/>
            <person name="Glodek A."/>
            <person name="Gong F."/>
            <person name="Gorrell J.H."/>
            <person name="Gu Z."/>
            <person name="Guan P."/>
            <person name="Harris M."/>
            <person name="Harris N.L."/>
            <person name="Harvey D.A."/>
            <person name="Heiman T.J."/>
            <person name="Hernandez J.R."/>
            <person name="Houck J."/>
            <person name="Hostin D."/>
            <person name="Houston K.A."/>
            <person name="Howland T.J."/>
            <person name="Wei M.-H."/>
            <person name="Ibegwam C."/>
            <person name="Jalali M."/>
            <person name="Kalush F."/>
            <person name="Karpen G.H."/>
            <person name="Ke Z."/>
            <person name="Kennison J.A."/>
            <person name="Ketchum K.A."/>
            <person name="Kimmel B.E."/>
            <person name="Kodira C.D."/>
            <person name="Kraft C.L."/>
            <person name="Kravitz S."/>
            <person name="Kulp D."/>
            <person name="Lai Z."/>
            <person name="Lasko P."/>
            <person name="Lei Y."/>
            <person name="Levitsky A.A."/>
            <person name="Li J.H."/>
            <person name="Li Z."/>
            <person name="Liang Y."/>
            <person name="Lin X."/>
            <person name="Liu X."/>
            <person name="Mattei B."/>
            <person name="McIntosh T.C."/>
            <person name="McLeod M.P."/>
            <person name="McPherson D."/>
            <person name="Merkulov G."/>
            <person name="Milshina N.V."/>
            <person name="Mobarry C."/>
            <person name="Morris J."/>
            <person name="Moshrefi A."/>
            <person name="Mount S.M."/>
            <person name="Moy M."/>
            <person name="Murphy B."/>
            <person name="Murphy L."/>
            <person name="Muzny D.M."/>
            <person name="Nelson D.L."/>
            <person name="Nelson D.R."/>
            <person name="Nelson K.A."/>
            <person name="Nixon K."/>
            <person name="Nusskern D.R."/>
            <person name="Pacleb J.M."/>
            <person name="Palazzolo M."/>
            <person name="Pittman G.S."/>
            <person name="Pan S."/>
            <person name="Pollard J."/>
            <person name="Puri V."/>
            <person name="Reese M.G."/>
            <person name="Reinert K."/>
            <person name="Remington K."/>
            <person name="Saunders R.D.C."/>
            <person name="Scheeler F."/>
            <person name="Shen H."/>
            <person name="Shue B.C."/>
            <person name="Siden-Kiamos I."/>
            <person name="Simpson M."/>
            <person name="Skupski M.P."/>
            <person name="Smith T.J."/>
            <person name="Spier E."/>
            <person name="Spradling A.C."/>
            <person name="Stapleton M."/>
            <person name="Strong R."/>
            <person name="Sun E."/>
            <person name="Svirskas R."/>
            <person name="Tector C."/>
            <person name="Turner R."/>
            <person name="Venter E."/>
            <person name="Wang A.H."/>
            <person name="Wang X."/>
            <person name="Wang Z.-Y."/>
            <person name="Wassarman D.A."/>
            <person name="Weinstock G.M."/>
            <person name="Weissenbach J."/>
            <person name="Williams S.M."/>
            <person name="Woodage T."/>
            <person name="Worley K.C."/>
            <person name="Wu D."/>
            <person name="Yang S."/>
            <person name="Yao Q.A."/>
            <person name="Ye J."/>
            <person name="Yeh R.-F."/>
            <person name="Zaveri J.S."/>
            <person name="Zhan M."/>
            <person name="Zhang G."/>
            <person name="Zhao Q."/>
            <person name="Zheng L."/>
            <person name="Zheng X.H."/>
            <person name="Zhong F.N."/>
            <person name="Zhong W."/>
            <person name="Zhou X."/>
            <person name="Zhu S.C."/>
            <person name="Zhu X."/>
            <person name="Smith H.O."/>
            <person name="Gibbs R.A."/>
            <person name="Myers E.W."/>
            <person name="Rubin G.M."/>
            <person name="Venter J.C."/>
        </authorList>
    </citation>
    <scope>NUCLEOTIDE SEQUENCE [LARGE SCALE GENOMIC DNA]</scope>
    <source>
        <strain>Berkeley</strain>
    </source>
</reference>
<reference key="2">
    <citation type="journal article" date="2002" name="Genome Biol.">
        <title>Annotation of the Drosophila melanogaster euchromatic genome: a systematic review.</title>
        <authorList>
            <person name="Misra S."/>
            <person name="Crosby M.A."/>
            <person name="Mungall C.J."/>
            <person name="Matthews B.B."/>
            <person name="Campbell K.S."/>
            <person name="Hradecky P."/>
            <person name="Huang Y."/>
            <person name="Kaminker J.S."/>
            <person name="Millburn G.H."/>
            <person name="Prochnik S.E."/>
            <person name="Smith C.D."/>
            <person name="Tupy J.L."/>
            <person name="Whitfield E.J."/>
            <person name="Bayraktaroglu L."/>
            <person name="Berman B.P."/>
            <person name="Bettencourt B.R."/>
            <person name="Celniker S.E."/>
            <person name="de Grey A.D.N.J."/>
            <person name="Drysdale R.A."/>
            <person name="Harris N.L."/>
            <person name="Richter J."/>
            <person name="Russo S."/>
            <person name="Schroeder A.J."/>
            <person name="Shu S.Q."/>
            <person name="Stapleton M."/>
            <person name="Yamada C."/>
            <person name="Ashburner M."/>
            <person name="Gelbart W.M."/>
            <person name="Rubin G.M."/>
            <person name="Lewis S.E."/>
        </authorList>
    </citation>
    <scope>GENOME REANNOTATION</scope>
    <source>
        <strain>Berkeley</strain>
    </source>
</reference>
<reference key="3">
    <citation type="submission" date="2009-06" db="EMBL/GenBank/DDBJ databases">
        <authorList>
            <person name="Carlson J.W."/>
            <person name="Booth B."/>
            <person name="Frise E."/>
            <person name="Sandler J."/>
            <person name="Wan K.H."/>
            <person name="Yu C."/>
            <person name="Celniker S.E."/>
        </authorList>
    </citation>
    <scope>NUCLEOTIDE SEQUENCE [LARGE SCALE MRNA]</scope>
    <source>
        <strain>Berkeley</strain>
    </source>
</reference>
<accession>Q9VU70</accession>
<accession>C5WLP7</accession>
<keyword id="KW-1185">Reference proteome</keyword>
<keyword id="KW-0677">Repeat</keyword>
<keyword id="KW-0802">TPR repeat</keyword>
<protein>
    <recommendedName>
        <fullName>Tetratricopeptide repeat protein 36 homolog</fullName>
        <shortName>TPR repeat protein 36 homolog</shortName>
    </recommendedName>
</protein>
<gene>
    <name type="ORF">CG14105</name>
</gene>
<organism>
    <name type="scientific">Drosophila melanogaster</name>
    <name type="common">Fruit fly</name>
    <dbReference type="NCBI Taxonomy" id="7227"/>
    <lineage>
        <taxon>Eukaryota</taxon>
        <taxon>Metazoa</taxon>
        <taxon>Ecdysozoa</taxon>
        <taxon>Arthropoda</taxon>
        <taxon>Hexapoda</taxon>
        <taxon>Insecta</taxon>
        <taxon>Pterygota</taxon>
        <taxon>Neoptera</taxon>
        <taxon>Endopterygota</taxon>
        <taxon>Diptera</taxon>
        <taxon>Brachycera</taxon>
        <taxon>Muscomorpha</taxon>
        <taxon>Ephydroidea</taxon>
        <taxon>Drosophilidae</taxon>
        <taxon>Drosophila</taxon>
        <taxon>Sophophora</taxon>
    </lineage>
</organism>
<sequence length="185" mass="20667">MPQANLTLSPHDQQVLDSIFNPLELSSLQTNNLIPAESDLKDEEPDTQAIKASRELELKAIALSESGELDGALELFQQSLNLAQRASVLNNRAQTLRLAKRDEEALDDLNKALELANDQQTRTKCHAHCQRGVLYRKLDNLEAARADFEAAAQLGSKFAREQLVEINPYAALCNQMLRQAFDQLK</sequence>
<feature type="chain" id="PRO_0000332187" description="Tetratricopeptide repeat protein 36 homolog">
    <location>
        <begin position="1"/>
        <end position="185"/>
    </location>
</feature>
<feature type="repeat" description="TPR 1">
    <location>
        <begin position="53"/>
        <end position="86"/>
    </location>
</feature>
<feature type="repeat" description="TPR 2">
    <location>
        <begin position="88"/>
        <end position="119"/>
    </location>
</feature>
<feature type="repeat" description="TPR 3">
    <location>
        <begin position="125"/>
        <end position="158"/>
    </location>
</feature>
<name>TTC36_DROME</name>
<evidence type="ECO:0000305" key="1"/>